<keyword id="KW-0150">Chloroplast</keyword>
<keyword id="KW-0201">Cytochrome c-type biogenesis</keyword>
<keyword id="KW-0472">Membrane</keyword>
<keyword id="KW-0934">Plastid</keyword>
<keyword id="KW-0793">Thylakoid</keyword>
<keyword id="KW-0812">Transmembrane</keyword>
<keyword id="KW-1133">Transmembrane helix</keyword>
<reference key="1">
    <citation type="journal article" date="2008" name="BMC Genomics">
        <title>Chloroplast genome sequencing analysis of Heterosigma akashiwo CCMP452 (West Atlantic) and NIES293 (West Pacific) strains.</title>
        <authorList>
            <person name="Cattolico R.A."/>
            <person name="Jacobs M.A."/>
            <person name="Zhou Y."/>
            <person name="Chang J."/>
            <person name="Duplessis M."/>
            <person name="Lybrand T."/>
            <person name="McKay J."/>
            <person name="Ong H.C."/>
            <person name="Sims E."/>
            <person name="Rocap G."/>
        </authorList>
    </citation>
    <scope>NUCLEOTIDE SEQUENCE [LARGE SCALE GENOMIC DNA]</scope>
</reference>
<protein>
    <recommendedName>
        <fullName evidence="1">Cytochrome c biogenesis protein Ccs1</fullName>
    </recommendedName>
</protein>
<evidence type="ECO:0000255" key="1">
    <source>
        <dbReference type="HAMAP-Rule" id="MF_01392"/>
    </source>
</evidence>
<geneLocation type="chloroplast"/>
<name>CCS1_HETA4</name>
<dbReference type="EMBL" id="EU168191">
    <property type="protein sequence ID" value="ABV70165.1"/>
    <property type="molecule type" value="Genomic_DNA"/>
</dbReference>
<dbReference type="SMR" id="B2XTT2"/>
<dbReference type="GO" id="GO:0009535">
    <property type="term" value="C:chloroplast thylakoid membrane"/>
    <property type="evidence" value="ECO:0007669"/>
    <property type="project" value="UniProtKB-SubCell"/>
</dbReference>
<dbReference type="GO" id="GO:0017004">
    <property type="term" value="P:cytochrome complex assembly"/>
    <property type="evidence" value="ECO:0007669"/>
    <property type="project" value="UniProtKB-UniRule"/>
</dbReference>
<dbReference type="HAMAP" id="MF_01392">
    <property type="entry name" value="CytC_Ccs1"/>
    <property type="match status" value="1"/>
</dbReference>
<dbReference type="InterPro" id="IPR023494">
    <property type="entry name" value="Cyt_c_bgen_Ccs1/CcsB/ResB"/>
</dbReference>
<dbReference type="InterPro" id="IPR007816">
    <property type="entry name" value="ResB-like_domain"/>
</dbReference>
<dbReference type="PANTHER" id="PTHR31566">
    <property type="entry name" value="CYTOCHROME C BIOGENESIS PROTEIN CCS1, CHLOROPLASTIC"/>
    <property type="match status" value="1"/>
</dbReference>
<dbReference type="PANTHER" id="PTHR31566:SF0">
    <property type="entry name" value="CYTOCHROME C BIOGENESIS PROTEIN CCS1, CHLOROPLASTIC"/>
    <property type="match status" value="1"/>
</dbReference>
<dbReference type="Pfam" id="PF05140">
    <property type="entry name" value="ResB"/>
    <property type="match status" value="1"/>
</dbReference>
<sequence>MEKIFKILANLKFAIALLLLISITITFGSIIEQDQTLDYYKQNYPLTNPIGGFLTWKVINMFQLNHIYKNFWFISLLLSLGISLIACTFFQQFPGIKFSRRCYFSNNPRKTDFQTQLKTNLSRNIIYTIISEGYFVFQQKKNFYGTKGIIGRIAPVFVHLSIILILLGSIFASLGGFNSQELIGKGEIFHIQNVTSSGPLTKLSQQAIRVNDFWINYYPNNKIKQFYSNLSIINGDGQEVRSKTISVNKPLIYKDLTFYQTDWNLLGLRISHNNKNFQIPVIQTTQNLNKVWLTWLPLESNTSKNLSGETIIINNYKGTIYIYDNNGQLNKKIELSNFIENKNYKLIEFLSVTGIQIKSDPGILFIYFGFGFLMVSTILSYLSFSQVWLGIDYLEQNNIKLTVNAKTNRTKVLLTTQMYKITKNKR</sequence>
<comment type="function">
    <text evidence="1">Required during biogenesis of c-type cytochromes (cytochrome c6 and cytochrome f) at the step of heme attachment.</text>
</comment>
<comment type="subunit">
    <text evidence="1">May interact with CcsA.</text>
</comment>
<comment type="subcellular location">
    <subcellularLocation>
        <location evidence="1">Plastid</location>
        <location evidence="1">Chloroplast thylakoid membrane</location>
        <topology evidence="1">Multi-pass membrane protein</topology>
    </subcellularLocation>
</comment>
<comment type="similarity">
    <text evidence="1">Belongs to the Ccs1/CcsB family.</text>
</comment>
<accession>B2XTT2</accession>
<gene>
    <name evidence="1" type="primary">ccs1</name>
    <name type="ordered locus">Heak452_Cp117</name>
</gene>
<proteinExistence type="inferred from homology"/>
<organism>
    <name type="scientific">Heterosigma akashiwo (strain CCMP452 / OLISTH)</name>
    <dbReference type="NCBI Taxonomy" id="536046"/>
    <lineage>
        <taxon>Eukaryota</taxon>
        <taxon>Sar</taxon>
        <taxon>Stramenopiles</taxon>
        <taxon>Ochrophyta</taxon>
        <taxon>Raphidophyceae</taxon>
        <taxon>Chattonellales</taxon>
        <taxon>Chattonellaceae</taxon>
        <taxon>Heterosigma</taxon>
    </lineage>
</organism>
<feature type="chain" id="PRO_0000363644" description="Cytochrome c biogenesis protein Ccs1">
    <location>
        <begin position="1"/>
        <end position="426"/>
    </location>
</feature>
<feature type="transmembrane region" description="Helical" evidence="1">
    <location>
        <begin position="11"/>
        <end position="31"/>
    </location>
</feature>
<feature type="transmembrane region" description="Helical" evidence="1">
    <location>
        <begin position="70"/>
        <end position="90"/>
    </location>
</feature>
<feature type="transmembrane region" description="Helical" evidence="1">
    <location>
        <begin position="153"/>
        <end position="173"/>
    </location>
</feature>